<sequence length="375" mass="38822">MRAQGDRYIGIMSGTSMDGADAVLVDFSGERPAVLAAAHEPFPDALRADFGQLQQPGDNEIHREALAANALARVYAGCVTTLLGQAGLQAGDVAAIGAHGQTIRHRPGLYDEIGYTRQSQHPALLAELAGIDVVADFRSRDVAAGGQGAPLVPALHQALFGDGAEARVVCNIGGISNISVLPGDSGAVIGFDCGPGNALLDYWIGEQLGMPYDDDGAWAASGRVDEALLAACLADPYFNAAPPKSTGRDLFHPAWLEARLATRSGPALSPADVQATLAALTAEAIARDVRAHAAPAKRLIVCGGGARNGYIMRRLAQALPGVAVQTTEDFGVPVSQVEAIAFAWLARQCLLRLPGNVATVTGAAGPRVLGAIYPR</sequence>
<accession>Q475S7</accession>
<comment type="function">
    <text evidence="1">Catalyzes the specific phosphorylation of 1,6-anhydro-N-acetylmuramic acid (anhMurNAc) with the simultaneous cleavage of the 1,6-anhydro ring, generating MurNAc-6-P. Is required for the utilization of anhMurNAc either imported from the medium or derived from its own cell wall murein, and thus plays a role in cell wall recycling.</text>
</comment>
<comment type="catalytic activity">
    <reaction evidence="1">
        <text>1,6-anhydro-N-acetyl-beta-muramate + ATP + H2O = N-acetyl-D-muramate 6-phosphate + ADP + H(+)</text>
        <dbReference type="Rhea" id="RHEA:24952"/>
        <dbReference type="ChEBI" id="CHEBI:15377"/>
        <dbReference type="ChEBI" id="CHEBI:15378"/>
        <dbReference type="ChEBI" id="CHEBI:30616"/>
        <dbReference type="ChEBI" id="CHEBI:58690"/>
        <dbReference type="ChEBI" id="CHEBI:58722"/>
        <dbReference type="ChEBI" id="CHEBI:456216"/>
        <dbReference type="EC" id="2.7.1.170"/>
    </reaction>
</comment>
<comment type="pathway">
    <text evidence="1">Amino-sugar metabolism; 1,6-anhydro-N-acetylmuramate degradation.</text>
</comment>
<comment type="pathway">
    <text evidence="1">Cell wall biogenesis; peptidoglycan recycling.</text>
</comment>
<comment type="similarity">
    <text evidence="1">Belongs to the anhydro-N-acetylmuramic acid kinase family.</text>
</comment>
<gene>
    <name evidence="1" type="primary">anmK</name>
    <name type="ordered locus">Reut_A0474</name>
</gene>
<feature type="chain" id="PRO_0000250037" description="Anhydro-N-acetylmuramic acid kinase">
    <location>
        <begin position="1"/>
        <end position="375"/>
    </location>
</feature>
<feature type="binding site" evidence="1">
    <location>
        <begin position="14"/>
        <end position="21"/>
    </location>
    <ligand>
        <name>ATP</name>
        <dbReference type="ChEBI" id="CHEBI:30616"/>
    </ligand>
</feature>
<reference key="1">
    <citation type="journal article" date="2010" name="PLoS ONE">
        <title>The complete multipartite genome sequence of Cupriavidus necator JMP134, a versatile pollutant degrader.</title>
        <authorList>
            <person name="Lykidis A."/>
            <person name="Perez-Pantoja D."/>
            <person name="Ledger T."/>
            <person name="Mavromatis K."/>
            <person name="Anderson I.J."/>
            <person name="Ivanova N.N."/>
            <person name="Hooper S.D."/>
            <person name="Lapidus A."/>
            <person name="Lucas S."/>
            <person name="Gonzalez B."/>
            <person name="Kyrpides N.C."/>
        </authorList>
    </citation>
    <scope>NUCLEOTIDE SEQUENCE [LARGE SCALE GENOMIC DNA]</scope>
    <source>
        <strain>JMP134 / LMG 1197</strain>
    </source>
</reference>
<dbReference type="EC" id="2.7.1.170" evidence="1"/>
<dbReference type="EMBL" id="CP000090">
    <property type="protein sequence ID" value="AAZ59856.1"/>
    <property type="molecule type" value="Genomic_DNA"/>
</dbReference>
<dbReference type="SMR" id="Q475S7"/>
<dbReference type="STRING" id="264198.Reut_A0474"/>
<dbReference type="KEGG" id="reu:Reut_A0474"/>
<dbReference type="eggNOG" id="COG2377">
    <property type="taxonomic scope" value="Bacteria"/>
</dbReference>
<dbReference type="HOGENOM" id="CLU_038782_0_0_4"/>
<dbReference type="OrthoDB" id="9763949at2"/>
<dbReference type="UniPathway" id="UPA00343"/>
<dbReference type="UniPathway" id="UPA00544"/>
<dbReference type="GO" id="GO:0005524">
    <property type="term" value="F:ATP binding"/>
    <property type="evidence" value="ECO:0007669"/>
    <property type="project" value="UniProtKB-UniRule"/>
</dbReference>
<dbReference type="GO" id="GO:0016301">
    <property type="term" value="F:kinase activity"/>
    <property type="evidence" value="ECO:0007669"/>
    <property type="project" value="UniProtKB-KW"/>
</dbReference>
<dbReference type="GO" id="GO:0016773">
    <property type="term" value="F:phosphotransferase activity, alcohol group as acceptor"/>
    <property type="evidence" value="ECO:0007669"/>
    <property type="project" value="UniProtKB-UniRule"/>
</dbReference>
<dbReference type="GO" id="GO:0097175">
    <property type="term" value="P:1,6-anhydro-N-acetyl-beta-muramic acid catabolic process"/>
    <property type="evidence" value="ECO:0007669"/>
    <property type="project" value="UniProtKB-UniRule"/>
</dbReference>
<dbReference type="GO" id="GO:0006040">
    <property type="term" value="P:amino sugar metabolic process"/>
    <property type="evidence" value="ECO:0007669"/>
    <property type="project" value="InterPro"/>
</dbReference>
<dbReference type="GO" id="GO:0009254">
    <property type="term" value="P:peptidoglycan turnover"/>
    <property type="evidence" value="ECO:0007669"/>
    <property type="project" value="UniProtKB-UniRule"/>
</dbReference>
<dbReference type="CDD" id="cd24050">
    <property type="entry name" value="ASKHA_NBD_ANMK"/>
    <property type="match status" value="1"/>
</dbReference>
<dbReference type="Gene3D" id="3.30.420.40">
    <property type="match status" value="2"/>
</dbReference>
<dbReference type="HAMAP" id="MF_01270">
    <property type="entry name" value="AnhMurNAc_kinase"/>
    <property type="match status" value="1"/>
</dbReference>
<dbReference type="InterPro" id="IPR005338">
    <property type="entry name" value="Anhydro_N_Ac-Mur_kinase"/>
</dbReference>
<dbReference type="InterPro" id="IPR043129">
    <property type="entry name" value="ATPase_NBD"/>
</dbReference>
<dbReference type="NCBIfam" id="NF007139">
    <property type="entry name" value="PRK09585.1-3"/>
    <property type="match status" value="1"/>
</dbReference>
<dbReference type="PANTHER" id="PTHR30605">
    <property type="entry name" value="ANHYDRO-N-ACETYLMURAMIC ACID KINASE"/>
    <property type="match status" value="1"/>
</dbReference>
<dbReference type="PANTHER" id="PTHR30605:SF0">
    <property type="entry name" value="ANHYDRO-N-ACETYLMURAMIC ACID KINASE"/>
    <property type="match status" value="1"/>
</dbReference>
<dbReference type="Pfam" id="PF03702">
    <property type="entry name" value="AnmK"/>
    <property type="match status" value="1"/>
</dbReference>
<dbReference type="SUPFAM" id="SSF53067">
    <property type="entry name" value="Actin-like ATPase domain"/>
    <property type="match status" value="1"/>
</dbReference>
<organism>
    <name type="scientific">Cupriavidus pinatubonensis (strain JMP 134 / LMG 1197)</name>
    <name type="common">Cupriavidus necator (strain JMP 134)</name>
    <dbReference type="NCBI Taxonomy" id="264198"/>
    <lineage>
        <taxon>Bacteria</taxon>
        <taxon>Pseudomonadati</taxon>
        <taxon>Pseudomonadota</taxon>
        <taxon>Betaproteobacteria</taxon>
        <taxon>Burkholderiales</taxon>
        <taxon>Burkholderiaceae</taxon>
        <taxon>Cupriavidus</taxon>
    </lineage>
</organism>
<name>ANMK_CUPPJ</name>
<proteinExistence type="inferred from homology"/>
<evidence type="ECO:0000255" key="1">
    <source>
        <dbReference type="HAMAP-Rule" id="MF_01270"/>
    </source>
</evidence>
<protein>
    <recommendedName>
        <fullName evidence="1">Anhydro-N-acetylmuramic acid kinase</fullName>
        <ecNumber evidence="1">2.7.1.170</ecNumber>
    </recommendedName>
    <alternativeName>
        <fullName evidence="1">AnhMurNAc kinase</fullName>
    </alternativeName>
</protein>
<keyword id="KW-0067">ATP-binding</keyword>
<keyword id="KW-0119">Carbohydrate metabolism</keyword>
<keyword id="KW-0418">Kinase</keyword>
<keyword id="KW-0547">Nucleotide-binding</keyword>
<keyword id="KW-0808">Transferase</keyword>